<keyword id="KW-0963">Cytoplasm</keyword>
<keyword id="KW-0378">Hydrolase</keyword>
<keyword id="KW-0540">Nuclease</keyword>
<keyword id="KW-0690">Ribosome biogenesis</keyword>
<evidence type="ECO:0000255" key="1">
    <source>
        <dbReference type="HAMAP-Rule" id="MF_00651"/>
    </source>
</evidence>
<accession>B8DIJ5</accession>
<name>YQGF_NITV9</name>
<dbReference type="EC" id="3.1.-.-" evidence="1"/>
<dbReference type="EMBL" id="CP001197">
    <property type="protein sequence ID" value="ACL09293.1"/>
    <property type="molecule type" value="Genomic_DNA"/>
</dbReference>
<dbReference type="SMR" id="B8DIJ5"/>
<dbReference type="STRING" id="883.DvMF_2352"/>
<dbReference type="KEGG" id="dvm:DvMF_2352"/>
<dbReference type="eggNOG" id="COG0816">
    <property type="taxonomic scope" value="Bacteria"/>
</dbReference>
<dbReference type="HOGENOM" id="CLU_098240_2_2_7"/>
<dbReference type="OrthoDB" id="9796140at2"/>
<dbReference type="GO" id="GO:0005829">
    <property type="term" value="C:cytosol"/>
    <property type="evidence" value="ECO:0007669"/>
    <property type="project" value="TreeGrafter"/>
</dbReference>
<dbReference type="GO" id="GO:0004518">
    <property type="term" value="F:nuclease activity"/>
    <property type="evidence" value="ECO:0007669"/>
    <property type="project" value="UniProtKB-KW"/>
</dbReference>
<dbReference type="GO" id="GO:0000967">
    <property type="term" value="P:rRNA 5'-end processing"/>
    <property type="evidence" value="ECO:0007669"/>
    <property type="project" value="UniProtKB-UniRule"/>
</dbReference>
<dbReference type="CDD" id="cd16964">
    <property type="entry name" value="YqgF"/>
    <property type="match status" value="1"/>
</dbReference>
<dbReference type="Gene3D" id="3.30.420.140">
    <property type="entry name" value="YqgF/RNase H-like domain"/>
    <property type="match status" value="1"/>
</dbReference>
<dbReference type="HAMAP" id="MF_00651">
    <property type="entry name" value="Nuclease_YqgF"/>
    <property type="match status" value="1"/>
</dbReference>
<dbReference type="InterPro" id="IPR012337">
    <property type="entry name" value="RNaseH-like_sf"/>
</dbReference>
<dbReference type="InterPro" id="IPR005227">
    <property type="entry name" value="YqgF"/>
</dbReference>
<dbReference type="InterPro" id="IPR006641">
    <property type="entry name" value="YqgF/RNaseH-like_dom"/>
</dbReference>
<dbReference type="InterPro" id="IPR037027">
    <property type="entry name" value="YqgF/RNaseH-like_dom_sf"/>
</dbReference>
<dbReference type="NCBIfam" id="TIGR00250">
    <property type="entry name" value="RNAse_H_YqgF"/>
    <property type="match status" value="1"/>
</dbReference>
<dbReference type="PANTHER" id="PTHR33317">
    <property type="entry name" value="POLYNUCLEOTIDYL TRANSFERASE, RIBONUCLEASE H-LIKE SUPERFAMILY PROTEIN"/>
    <property type="match status" value="1"/>
</dbReference>
<dbReference type="PANTHER" id="PTHR33317:SF4">
    <property type="entry name" value="POLYNUCLEOTIDYL TRANSFERASE, RIBONUCLEASE H-LIKE SUPERFAMILY PROTEIN"/>
    <property type="match status" value="1"/>
</dbReference>
<dbReference type="Pfam" id="PF03652">
    <property type="entry name" value="RuvX"/>
    <property type="match status" value="1"/>
</dbReference>
<dbReference type="SMART" id="SM00732">
    <property type="entry name" value="YqgFc"/>
    <property type="match status" value="1"/>
</dbReference>
<dbReference type="SUPFAM" id="SSF53098">
    <property type="entry name" value="Ribonuclease H-like"/>
    <property type="match status" value="1"/>
</dbReference>
<sequence>MKYLGIDYGTKRTGVAASDTGGSMAFPRRTIVMTTRDRFFAELLAVAEEERAEAYVVGLPLLHDGTDTLTTRQVRNFVERLKRRTTLPVYLMEEFLSSYEAEDDLRDAGLSGRALEAVVDQQAAVRILQSFLNLPESRRTPA</sequence>
<reference key="1">
    <citation type="submission" date="2008-10" db="EMBL/GenBank/DDBJ databases">
        <title>Complete sequence of Desulfovibrio vulgaris str. 'Miyazaki F'.</title>
        <authorList>
            <person name="Lucas S."/>
            <person name="Copeland A."/>
            <person name="Lapidus A."/>
            <person name="Glavina del Rio T."/>
            <person name="Dalin E."/>
            <person name="Tice H."/>
            <person name="Bruce D."/>
            <person name="Goodwin L."/>
            <person name="Pitluck S."/>
            <person name="Sims D."/>
            <person name="Brettin T."/>
            <person name="Detter J.C."/>
            <person name="Han C."/>
            <person name="Larimer F."/>
            <person name="Land M."/>
            <person name="Hauser L."/>
            <person name="Kyrpides N."/>
            <person name="Mikhailova N."/>
            <person name="Hazen T.C."/>
            <person name="Richardson P."/>
        </authorList>
    </citation>
    <scope>NUCLEOTIDE SEQUENCE [LARGE SCALE GENOMIC DNA]</scope>
    <source>
        <strain>DSM 19637 / Miyazaki F</strain>
    </source>
</reference>
<gene>
    <name type="ordered locus">DvMF_2352</name>
</gene>
<feature type="chain" id="PRO_1000131024" description="Putative pre-16S rRNA nuclease">
    <location>
        <begin position="1"/>
        <end position="142"/>
    </location>
</feature>
<proteinExistence type="inferred from homology"/>
<organism>
    <name type="scientific">Nitratidesulfovibrio vulgaris (strain DSM 19637 / Miyazaki F)</name>
    <name type="common">Desulfovibrio vulgaris</name>
    <dbReference type="NCBI Taxonomy" id="883"/>
    <lineage>
        <taxon>Bacteria</taxon>
        <taxon>Pseudomonadati</taxon>
        <taxon>Thermodesulfobacteriota</taxon>
        <taxon>Desulfovibrionia</taxon>
        <taxon>Desulfovibrionales</taxon>
        <taxon>Desulfovibrionaceae</taxon>
        <taxon>Nitratidesulfovibrio</taxon>
    </lineage>
</organism>
<protein>
    <recommendedName>
        <fullName evidence="1">Putative pre-16S rRNA nuclease</fullName>
        <ecNumber evidence="1">3.1.-.-</ecNumber>
    </recommendedName>
</protein>
<comment type="function">
    <text evidence="1">Could be a nuclease involved in processing of the 5'-end of pre-16S rRNA.</text>
</comment>
<comment type="subcellular location">
    <subcellularLocation>
        <location evidence="1">Cytoplasm</location>
    </subcellularLocation>
</comment>
<comment type="similarity">
    <text evidence="1">Belongs to the YqgF nuclease family.</text>
</comment>